<accession>P84347</accession>
<sequence>YPESIDWRDKGAVTPVKNQNPCGSCWAFSTVATVEGINKIRTGKLISLSEQELLDCDRRSHGCKGGYQTGSIQYVADNGGVHTEKEYPYEKKQGKCRAKEKKGTKVQITGYKRVPANDEISLIQGIGNQPVSVLHESKGRAFQLYKGGIFNGPCGYKNDHAVTAIGYGKAQLLDKNSWGPNWGEKGYIKIKRASGKSEGTCGVYKSSYFPIKGYR</sequence>
<protein>
    <recommendedName>
        <fullName>Chymomexicain</fullName>
        <ecNumber evidence="2">3.4.22.-</ecNumber>
    </recommendedName>
</protein>
<organism>
    <name type="scientific">Jacaratia mexicana</name>
    <name type="common">Wild papaya</name>
    <name type="synonym">Pileus mexicanus</name>
    <dbReference type="NCBI Taxonomy" id="309130"/>
    <lineage>
        <taxon>Eukaryota</taxon>
        <taxon>Viridiplantae</taxon>
        <taxon>Streptophyta</taxon>
        <taxon>Embryophyta</taxon>
        <taxon>Tracheophyta</taxon>
        <taxon>Spermatophyta</taxon>
        <taxon>Magnoliopsida</taxon>
        <taxon>eudicotyledons</taxon>
        <taxon>Gunneridae</taxon>
        <taxon>Pentapetalae</taxon>
        <taxon>rosids</taxon>
        <taxon>malvids</taxon>
        <taxon>Brassicales</taxon>
        <taxon>Caricaceae</taxon>
        <taxon>Jacaratia</taxon>
    </lineage>
</organism>
<reference evidence="8" key="1">
    <citation type="thesis" date="1999" institute="Boston University" country="United States">
        <title>Modification of calcite crystal morphology by designed phosphopeptides and primary structures and substrate specificities of the cysteine proteases mexicain and chymomexicain.</title>
        <authorList>
            <person name="Lian Z."/>
        </authorList>
    </citation>
    <scope>PROTEIN SEQUENCE</scope>
    <scope>FUNCTION</scope>
</reference>
<dbReference type="EC" id="3.4.22.-" evidence="2"/>
<dbReference type="SMR" id="P84347"/>
<dbReference type="GO" id="GO:0008234">
    <property type="term" value="F:cysteine-type peptidase activity"/>
    <property type="evidence" value="ECO:0007669"/>
    <property type="project" value="UniProtKB-KW"/>
</dbReference>
<dbReference type="GO" id="GO:0006508">
    <property type="term" value="P:proteolysis"/>
    <property type="evidence" value="ECO:0007669"/>
    <property type="project" value="UniProtKB-KW"/>
</dbReference>
<dbReference type="CDD" id="cd02248">
    <property type="entry name" value="Peptidase_C1A"/>
    <property type="match status" value="1"/>
</dbReference>
<dbReference type="Gene3D" id="3.90.70.10">
    <property type="entry name" value="Cysteine proteinases"/>
    <property type="match status" value="1"/>
</dbReference>
<dbReference type="InterPro" id="IPR038765">
    <property type="entry name" value="Papain-like_cys_pep_sf"/>
</dbReference>
<dbReference type="InterPro" id="IPR000169">
    <property type="entry name" value="Pept_cys_AS"/>
</dbReference>
<dbReference type="InterPro" id="IPR025660">
    <property type="entry name" value="Pept_his_AS"/>
</dbReference>
<dbReference type="InterPro" id="IPR013128">
    <property type="entry name" value="Peptidase_C1A"/>
</dbReference>
<dbReference type="InterPro" id="IPR000668">
    <property type="entry name" value="Peptidase_C1A_C"/>
</dbReference>
<dbReference type="InterPro" id="IPR039417">
    <property type="entry name" value="Peptidase_C1A_papain-like"/>
</dbReference>
<dbReference type="PANTHER" id="PTHR12411">
    <property type="entry name" value="CYSTEINE PROTEASE FAMILY C1-RELATED"/>
    <property type="match status" value="1"/>
</dbReference>
<dbReference type="Pfam" id="PF00112">
    <property type="entry name" value="Peptidase_C1"/>
    <property type="match status" value="1"/>
</dbReference>
<dbReference type="PRINTS" id="PR00705">
    <property type="entry name" value="PAPAIN"/>
</dbReference>
<dbReference type="SMART" id="SM00645">
    <property type="entry name" value="Pept_C1"/>
    <property type="match status" value="1"/>
</dbReference>
<dbReference type="SUPFAM" id="SSF54001">
    <property type="entry name" value="Cysteine proteinases"/>
    <property type="match status" value="1"/>
</dbReference>
<dbReference type="PROSITE" id="PS00139">
    <property type="entry name" value="THIOL_PROTEASE_CYS"/>
    <property type="match status" value="1"/>
</dbReference>
<dbReference type="PROSITE" id="PS00639">
    <property type="entry name" value="THIOL_PROTEASE_HIS"/>
    <property type="match status" value="1"/>
</dbReference>
<comment type="function">
    <text evidence="7">Cysteine protease.</text>
</comment>
<comment type="similarity">
    <text evidence="4 5">Belongs to the peptidase C1 family.</text>
</comment>
<name>MEX2_JACME</name>
<proteinExistence type="evidence at protein level"/>
<keyword id="KW-0903">Direct protein sequencing</keyword>
<keyword id="KW-1015">Disulfide bond</keyword>
<keyword id="KW-0378">Hydrolase</keyword>
<keyword id="KW-0645">Protease</keyword>
<keyword id="KW-0732">Signal</keyword>
<keyword id="KW-0788">Thiol protease</keyword>
<feature type="signal peptide" evidence="3">
    <location>
        <begin position="1"/>
        <end status="unknown"/>
    </location>
</feature>
<feature type="chain" id="PRO_0000050557" description="Chymomexicain">
    <location>
        <begin status="unknown"/>
        <end position="215"/>
    </location>
</feature>
<feature type="active site" evidence="4">
    <location>
        <position position="25"/>
    </location>
</feature>
<feature type="active site" evidence="5">
    <location>
        <position position="160"/>
    </location>
</feature>
<feature type="active site" evidence="6">
    <location>
        <position position="176"/>
    </location>
</feature>
<feature type="disulfide bond" evidence="1">
    <location>
        <begin position="22"/>
        <end position="63"/>
    </location>
</feature>
<feature type="disulfide bond" evidence="1">
    <location>
        <begin position="56"/>
        <end position="96"/>
    </location>
</feature>
<feature type="disulfide bond" evidence="1">
    <location>
        <begin position="154"/>
        <end position="201"/>
    </location>
</feature>
<evidence type="ECO:0000250" key="1">
    <source>
        <dbReference type="UniProtKB" id="P14080"/>
    </source>
</evidence>
<evidence type="ECO:0000250" key="2">
    <source>
        <dbReference type="UniProtKB" id="P80884"/>
    </source>
</evidence>
<evidence type="ECO:0000255" key="3"/>
<evidence type="ECO:0000255" key="4">
    <source>
        <dbReference type="PROSITE-ProRule" id="PRU10088"/>
    </source>
</evidence>
<evidence type="ECO:0000255" key="5">
    <source>
        <dbReference type="PROSITE-ProRule" id="PRU10089"/>
    </source>
</evidence>
<evidence type="ECO:0000255" key="6">
    <source>
        <dbReference type="PROSITE-ProRule" id="PRU10090"/>
    </source>
</evidence>
<evidence type="ECO:0000269" key="7">
    <source ref="1"/>
</evidence>
<evidence type="ECO:0000305" key="8"/>